<keyword id="KW-0627">Porphyrin biosynthesis</keyword>
<keyword id="KW-1185">Reference proteome</keyword>
<keyword id="KW-0808">Transferase</keyword>
<reference key="1">
    <citation type="journal article" date="2008" name="Environ. Microbiol.">
        <title>The genome of Erwinia tasmaniensis strain Et1/99, a non-pathogenic bacterium in the genus Erwinia.</title>
        <authorList>
            <person name="Kube M."/>
            <person name="Migdoll A.M."/>
            <person name="Mueller I."/>
            <person name="Kuhl H."/>
            <person name="Beck A."/>
            <person name="Reinhardt R."/>
            <person name="Geider K."/>
        </authorList>
    </citation>
    <scope>NUCLEOTIDE SEQUENCE [LARGE SCALE GENOMIC DNA]</scope>
    <source>
        <strain>DSM 17950 / CFBP 7177 / CIP 109463 / NCPPB 4357 / Et1/99</strain>
    </source>
</reference>
<comment type="function">
    <text evidence="1">Tetrapolymerization of the monopyrrole PBG into the hydroxymethylbilane pre-uroporphyrinogen in several discrete steps.</text>
</comment>
<comment type="catalytic activity">
    <reaction evidence="1">
        <text>4 porphobilinogen + H2O = hydroxymethylbilane + 4 NH4(+)</text>
        <dbReference type="Rhea" id="RHEA:13185"/>
        <dbReference type="ChEBI" id="CHEBI:15377"/>
        <dbReference type="ChEBI" id="CHEBI:28938"/>
        <dbReference type="ChEBI" id="CHEBI:57845"/>
        <dbReference type="ChEBI" id="CHEBI:58126"/>
        <dbReference type="EC" id="2.5.1.61"/>
    </reaction>
</comment>
<comment type="cofactor">
    <cofactor evidence="1">
        <name>dipyrromethane</name>
        <dbReference type="ChEBI" id="CHEBI:60342"/>
    </cofactor>
    <text evidence="1">Binds 1 dipyrromethane group covalently.</text>
</comment>
<comment type="pathway">
    <text evidence="1">Porphyrin-containing compound metabolism; protoporphyrin-IX biosynthesis; coproporphyrinogen-III from 5-aminolevulinate: step 2/4.</text>
</comment>
<comment type="subunit">
    <text evidence="1">Monomer.</text>
</comment>
<comment type="miscellaneous">
    <text evidence="1">The porphobilinogen subunits are added to the dipyrromethane group.</text>
</comment>
<comment type="similarity">
    <text evidence="1">Belongs to the HMBS family.</text>
</comment>
<name>HEM3_ERWT9</name>
<feature type="chain" id="PRO_1000114151" description="Porphobilinogen deaminase">
    <location>
        <begin position="1"/>
        <end position="313"/>
    </location>
</feature>
<feature type="modified residue" description="S-(dipyrrolylmethanemethyl)cysteine" evidence="1">
    <location>
        <position position="242"/>
    </location>
</feature>
<protein>
    <recommendedName>
        <fullName evidence="1">Porphobilinogen deaminase</fullName>
        <shortName evidence="1">PBG</shortName>
        <ecNumber evidence="1">2.5.1.61</ecNumber>
    </recommendedName>
    <alternativeName>
        <fullName evidence="1">Hydroxymethylbilane synthase</fullName>
        <shortName evidence="1">HMBS</shortName>
    </alternativeName>
    <alternativeName>
        <fullName evidence="1">Pre-uroporphyrinogen synthase</fullName>
    </alternativeName>
</protein>
<organism>
    <name type="scientific">Erwinia tasmaniensis (strain DSM 17950 / CFBP 7177 / CIP 109463 / NCPPB 4357 / Et1/99)</name>
    <dbReference type="NCBI Taxonomy" id="465817"/>
    <lineage>
        <taxon>Bacteria</taxon>
        <taxon>Pseudomonadati</taxon>
        <taxon>Pseudomonadota</taxon>
        <taxon>Gammaproteobacteria</taxon>
        <taxon>Enterobacterales</taxon>
        <taxon>Erwiniaceae</taxon>
        <taxon>Erwinia</taxon>
    </lineage>
</organism>
<gene>
    <name evidence="1" type="primary">hemC</name>
    <name type="ordered locus">ETA_02120</name>
</gene>
<dbReference type="EC" id="2.5.1.61" evidence="1"/>
<dbReference type="EMBL" id="CU468135">
    <property type="protein sequence ID" value="CAO95258.1"/>
    <property type="molecule type" value="Genomic_DNA"/>
</dbReference>
<dbReference type="RefSeq" id="WP_012439978.1">
    <property type="nucleotide sequence ID" value="NC_010694.1"/>
</dbReference>
<dbReference type="SMR" id="B2VG55"/>
<dbReference type="STRING" id="465817.ETA_02120"/>
<dbReference type="KEGG" id="eta:ETA_02120"/>
<dbReference type="eggNOG" id="COG0181">
    <property type="taxonomic scope" value="Bacteria"/>
</dbReference>
<dbReference type="HOGENOM" id="CLU_019704_0_2_6"/>
<dbReference type="OrthoDB" id="9810298at2"/>
<dbReference type="UniPathway" id="UPA00251">
    <property type="reaction ID" value="UER00319"/>
</dbReference>
<dbReference type="Proteomes" id="UP000001726">
    <property type="component" value="Chromosome"/>
</dbReference>
<dbReference type="GO" id="GO:0005737">
    <property type="term" value="C:cytoplasm"/>
    <property type="evidence" value="ECO:0007669"/>
    <property type="project" value="TreeGrafter"/>
</dbReference>
<dbReference type="GO" id="GO:0004418">
    <property type="term" value="F:hydroxymethylbilane synthase activity"/>
    <property type="evidence" value="ECO:0007669"/>
    <property type="project" value="UniProtKB-UniRule"/>
</dbReference>
<dbReference type="GO" id="GO:0006782">
    <property type="term" value="P:protoporphyrinogen IX biosynthetic process"/>
    <property type="evidence" value="ECO:0007669"/>
    <property type="project" value="UniProtKB-UniRule"/>
</dbReference>
<dbReference type="CDD" id="cd13646">
    <property type="entry name" value="PBP2_EcHMBS_like"/>
    <property type="match status" value="1"/>
</dbReference>
<dbReference type="FunFam" id="3.30.160.40:FF:000002">
    <property type="entry name" value="Porphobilinogen deaminase"/>
    <property type="match status" value="1"/>
</dbReference>
<dbReference type="FunFam" id="3.40.190.10:FF:000004">
    <property type="entry name" value="Porphobilinogen deaminase"/>
    <property type="match status" value="1"/>
</dbReference>
<dbReference type="FunFam" id="3.40.190.10:FF:000005">
    <property type="entry name" value="Porphobilinogen deaminase"/>
    <property type="match status" value="1"/>
</dbReference>
<dbReference type="Gene3D" id="3.40.190.10">
    <property type="entry name" value="Periplasmic binding protein-like II"/>
    <property type="match status" value="2"/>
</dbReference>
<dbReference type="Gene3D" id="3.30.160.40">
    <property type="entry name" value="Porphobilinogen deaminase, C-terminal domain"/>
    <property type="match status" value="1"/>
</dbReference>
<dbReference type="HAMAP" id="MF_00260">
    <property type="entry name" value="Porphobil_deam"/>
    <property type="match status" value="1"/>
</dbReference>
<dbReference type="InterPro" id="IPR000860">
    <property type="entry name" value="HemC"/>
</dbReference>
<dbReference type="InterPro" id="IPR022419">
    <property type="entry name" value="Porphobilin_deaminase_cofac_BS"/>
</dbReference>
<dbReference type="InterPro" id="IPR022417">
    <property type="entry name" value="Porphobilin_deaminase_N"/>
</dbReference>
<dbReference type="InterPro" id="IPR022418">
    <property type="entry name" value="Porphobilinogen_deaminase_C"/>
</dbReference>
<dbReference type="InterPro" id="IPR036803">
    <property type="entry name" value="Porphobilinogen_deaminase_C_sf"/>
</dbReference>
<dbReference type="NCBIfam" id="TIGR00212">
    <property type="entry name" value="hemC"/>
    <property type="match status" value="1"/>
</dbReference>
<dbReference type="PANTHER" id="PTHR11557">
    <property type="entry name" value="PORPHOBILINOGEN DEAMINASE"/>
    <property type="match status" value="1"/>
</dbReference>
<dbReference type="PANTHER" id="PTHR11557:SF0">
    <property type="entry name" value="PORPHOBILINOGEN DEAMINASE"/>
    <property type="match status" value="1"/>
</dbReference>
<dbReference type="Pfam" id="PF01379">
    <property type="entry name" value="Porphobil_deam"/>
    <property type="match status" value="1"/>
</dbReference>
<dbReference type="Pfam" id="PF03900">
    <property type="entry name" value="Porphobil_deamC"/>
    <property type="match status" value="1"/>
</dbReference>
<dbReference type="PIRSF" id="PIRSF001438">
    <property type="entry name" value="4pyrrol_synth_OHMeBilane_synth"/>
    <property type="match status" value="1"/>
</dbReference>
<dbReference type="PRINTS" id="PR00151">
    <property type="entry name" value="PORPHBDMNASE"/>
</dbReference>
<dbReference type="SUPFAM" id="SSF53850">
    <property type="entry name" value="Periplasmic binding protein-like II"/>
    <property type="match status" value="1"/>
</dbReference>
<dbReference type="SUPFAM" id="SSF54782">
    <property type="entry name" value="Porphobilinogen deaminase (hydroxymethylbilane synthase), C-terminal domain"/>
    <property type="match status" value="1"/>
</dbReference>
<dbReference type="PROSITE" id="PS00533">
    <property type="entry name" value="PORPHOBILINOGEN_DEAM"/>
    <property type="match status" value="1"/>
</dbReference>
<proteinExistence type="inferred from homology"/>
<accession>B2VG55</accession>
<evidence type="ECO:0000255" key="1">
    <source>
        <dbReference type="HAMAP-Rule" id="MF_00260"/>
    </source>
</evidence>
<sequence length="313" mass="33672">MSDKILRIATRRSPLALWQAEYVQRRLIACHPGLRVELLPMVTRGDVILDTPLAKVGGKGLFVKELEQAMLSGSADIAVHSMKDVPVAFPPGLGLVAICEREDPHDAFVSHHYTSVDSLPQGAIVGTSSLRRQCQLSARRPDLVIRSLRGNVGTRLGKLDAGEYDAIILAVAGLKRLGLGDRIRQVMPAEESLPAVGQGAVGIECRLDDIQTIALLAALNHSETACRVSAERAMNTRLEGGCQVPIGSYALLEDDQLWLRGLVGSPDGNEMVRGERRGPRADAEKMGISLAEELLENGARDILAAVYQGNPPA</sequence>